<proteinExistence type="inferred from homology"/>
<feature type="chain" id="PRO_0000391638" description="Secreted effector protein SteB">
    <location>
        <begin position="1"/>
        <end position="133"/>
    </location>
</feature>
<accession>D0ZI38</accession>
<dbReference type="EMBL" id="CP001363">
    <property type="protein sequence ID" value="ACY88441.1"/>
    <property type="molecule type" value="Genomic_DNA"/>
</dbReference>
<dbReference type="RefSeq" id="WP_001540100.1">
    <property type="nucleotide sequence ID" value="NZ_CP043402.1"/>
</dbReference>
<dbReference type="KEGG" id="seo:STM14_1970"/>
<dbReference type="HOGENOM" id="CLU_1892472_0_0_6"/>
<dbReference type="BioCyc" id="SENT588858:STM14_RS26010-MONOMER"/>
<dbReference type="PHI-base" id="PHI:3750"/>
<dbReference type="Proteomes" id="UP000002695">
    <property type="component" value="Chromosome"/>
</dbReference>
<dbReference type="GO" id="GO:0005576">
    <property type="term" value="C:extracellular region"/>
    <property type="evidence" value="ECO:0007669"/>
    <property type="project" value="UniProtKB-SubCell"/>
</dbReference>
<dbReference type="GO" id="GO:0030430">
    <property type="term" value="C:host cell cytoplasm"/>
    <property type="evidence" value="ECO:0007669"/>
    <property type="project" value="UniProtKB-SubCell"/>
</dbReference>
<protein>
    <recommendedName>
        <fullName>Secreted effector protein SteB</fullName>
    </recommendedName>
    <alternativeName>
        <fullName>Salmonella translocated effector B</fullName>
    </alternativeName>
</protein>
<organism>
    <name type="scientific">Salmonella typhimurium (strain 14028s / SGSC 2262)</name>
    <dbReference type="NCBI Taxonomy" id="588858"/>
    <lineage>
        <taxon>Bacteria</taxon>
        <taxon>Pseudomonadati</taxon>
        <taxon>Pseudomonadota</taxon>
        <taxon>Gammaproteobacteria</taxon>
        <taxon>Enterobacterales</taxon>
        <taxon>Enterobacteriaceae</taxon>
        <taxon>Salmonella</taxon>
    </lineage>
</organism>
<evidence type="ECO:0000250" key="1"/>
<evidence type="ECO:0000269" key="2">
    <source>
    </source>
</evidence>
<keyword id="KW-1035">Host cytoplasm</keyword>
<keyword id="KW-0964">Secreted</keyword>
<keyword id="KW-0843">Virulence</keyword>
<comment type="function">
    <text evidence="1">Effector proteins function to alter host cell physiology and promote bacterial survival in host tissues.</text>
</comment>
<comment type="subcellular location">
    <subcellularLocation>
        <location evidence="2">Secreted</location>
    </subcellularLocation>
    <subcellularLocation>
        <location evidence="2">Host cytoplasm</location>
    </subcellularLocation>
    <text>Secreted via type III secretion systems 1 and 2 (SPI-1 and SPI-2 T3SS), and delivered into the host cytoplasm.</text>
</comment>
<name>STEB_SALT1</name>
<reference key="1">
    <citation type="journal article" date="2010" name="J. Bacteriol.">
        <title>Short-term signatures of evolutionary change in the Salmonella enterica serovar typhimurium 14028 genome.</title>
        <authorList>
            <person name="Jarvik T."/>
            <person name="Smillie C."/>
            <person name="Groisman E.A."/>
            <person name="Ochman H."/>
        </authorList>
    </citation>
    <scope>NUCLEOTIDE SEQUENCE [LARGE SCALE GENOMIC DNA]</scope>
    <source>
        <strain>14028s / SGSC 2262</strain>
    </source>
</reference>
<reference key="2">
    <citation type="journal article" date="2005" name="Infect. Immun.">
        <title>Identification of new secreted effectors in Salmonella enterica serovar Typhimurium.</title>
        <authorList>
            <person name="Geddes K."/>
            <person name="Worley M."/>
            <person name="Niemann G."/>
            <person name="Heffron F."/>
        </authorList>
    </citation>
    <scope>SUBCELLULAR LOCATION</scope>
    <scope>SECRETION VIA TYPE III SECRETION SYSTEM</scope>
</reference>
<sequence length="133" mass="14389">MPISICKHGAPFVVQHENRYGSGASQSSSLSKSIRHISNSHEEIKFISCYSANGACFSNAQMLANASGRPVIGYYGKINKLTASLDNSGRIFRPQHKLAANICYVGNRLLSAPVQLGFGLKHLLTCHSNGNVR</sequence>
<gene>
    <name type="primary">steB</name>
    <name type="ordered locus">STM14_1970</name>
</gene>